<reference key="1">
    <citation type="journal article" date="2006" name="Nature">
        <title>Insights from the genome of the biotrophic fungal plant pathogen Ustilago maydis.</title>
        <authorList>
            <person name="Kaemper J."/>
            <person name="Kahmann R."/>
            <person name="Boelker M."/>
            <person name="Ma L.-J."/>
            <person name="Brefort T."/>
            <person name="Saville B.J."/>
            <person name="Banuett F."/>
            <person name="Kronstad J.W."/>
            <person name="Gold S.E."/>
            <person name="Mueller O."/>
            <person name="Perlin M.H."/>
            <person name="Woesten H.A.B."/>
            <person name="de Vries R."/>
            <person name="Ruiz-Herrera J."/>
            <person name="Reynaga-Pena C.G."/>
            <person name="Snetselaar K."/>
            <person name="McCann M."/>
            <person name="Perez-Martin J."/>
            <person name="Feldbruegge M."/>
            <person name="Basse C.W."/>
            <person name="Steinberg G."/>
            <person name="Ibeas J.I."/>
            <person name="Holloman W."/>
            <person name="Guzman P."/>
            <person name="Farman M.L."/>
            <person name="Stajich J.E."/>
            <person name="Sentandreu R."/>
            <person name="Gonzalez-Prieto J.M."/>
            <person name="Kennell J.C."/>
            <person name="Molina L."/>
            <person name="Schirawski J."/>
            <person name="Mendoza-Mendoza A."/>
            <person name="Greilinger D."/>
            <person name="Muench K."/>
            <person name="Roessel N."/>
            <person name="Scherer M."/>
            <person name="Vranes M."/>
            <person name="Ladendorf O."/>
            <person name="Vincon V."/>
            <person name="Fuchs U."/>
            <person name="Sandrock B."/>
            <person name="Meng S."/>
            <person name="Ho E.C.H."/>
            <person name="Cahill M.J."/>
            <person name="Boyce K.J."/>
            <person name="Klose J."/>
            <person name="Klosterman S.J."/>
            <person name="Deelstra H.J."/>
            <person name="Ortiz-Castellanos L."/>
            <person name="Li W."/>
            <person name="Sanchez-Alonso P."/>
            <person name="Schreier P.H."/>
            <person name="Haeuser-Hahn I."/>
            <person name="Vaupel M."/>
            <person name="Koopmann E."/>
            <person name="Friedrich G."/>
            <person name="Voss H."/>
            <person name="Schlueter T."/>
            <person name="Margolis J."/>
            <person name="Platt D."/>
            <person name="Swimmer C."/>
            <person name="Gnirke A."/>
            <person name="Chen F."/>
            <person name="Vysotskaia V."/>
            <person name="Mannhaupt G."/>
            <person name="Gueldener U."/>
            <person name="Muensterkoetter M."/>
            <person name="Haase D."/>
            <person name="Oesterheld M."/>
            <person name="Mewes H.-W."/>
            <person name="Mauceli E.W."/>
            <person name="DeCaprio D."/>
            <person name="Wade C.M."/>
            <person name="Butler J."/>
            <person name="Young S.K."/>
            <person name="Jaffe D.B."/>
            <person name="Calvo S.E."/>
            <person name="Nusbaum C."/>
            <person name="Galagan J.E."/>
            <person name="Birren B.W."/>
        </authorList>
    </citation>
    <scope>NUCLEOTIDE SEQUENCE [LARGE SCALE GENOMIC DNA]</scope>
    <source>
        <strain>DSM 14603 / FGSC 9021 / UM521</strain>
    </source>
</reference>
<reference key="2">
    <citation type="submission" date="2014-09" db="EMBL/GenBank/DDBJ databases">
        <authorList>
            <person name="Gueldener U."/>
            <person name="Muensterkoetter M."/>
            <person name="Walter M.C."/>
            <person name="Mannhaupt G."/>
            <person name="Kahmann R."/>
        </authorList>
    </citation>
    <scope>GENOME REANNOTATION</scope>
    <source>
        <strain>DSM 14603 / FGSC 9021 / UM521</strain>
    </source>
</reference>
<feature type="chain" id="PRO_0000232151" description="ATP-dependent RNA helicase FAL1">
    <location>
        <begin position="1"/>
        <end position="397"/>
    </location>
</feature>
<feature type="domain" description="Helicase ATP-binding" evidence="2">
    <location>
        <begin position="55"/>
        <end position="225"/>
    </location>
</feature>
<feature type="domain" description="Helicase C-terminal" evidence="3">
    <location>
        <begin position="236"/>
        <end position="397"/>
    </location>
</feature>
<feature type="short sequence motif" description="Q motif">
    <location>
        <begin position="24"/>
        <end position="52"/>
    </location>
</feature>
<feature type="short sequence motif" description="DEAD box">
    <location>
        <begin position="173"/>
        <end position="176"/>
    </location>
</feature>
<feature type="binding site" evidence="2">
    <location>
        <begin position="68"/>
        <end position="75"/>
    </location>
    <ligand>
        <name>ATP</name>
        <dbReference type="ChEBI" id="CHEBI:30616"/>
    </ligand>
</feature>
<keyword id="KW-0067">ATP-binding</keyword>
<keyword id="KW-0347">Helicase</keyword>
<keyword id="KW-0378">Hydrolase</keyword>
<keyword id="KW-0547">Nucleotide-binding</keyword>
<keyword id="KW-0539">Nucleus</keyword>
<keyword id="KW-1185">Reference proteome</keyword>
<keyword id="KW-0690">Ribosome biogenesis</keyword>
<keyword id="KW-0694">RNA-binding</keyword>
<keyword id="KW-0698">rRNA processing</keyword>
<gene>
    <name type="primary">FAL1</name>
    <name type="ORF">UMAG_06129</name>
</gene>
<name>FAL1_MYCMD</name>
<organism>
    <name type="scientific">Mycosarcoma maydis</name>
    <name type="common">Corn smut fungus</name>
    <name type="synonym">Ustilago maydis</name>
    <dbReference type="NCBI Taxonomy" id="5270"/>
    <lineage>
        <taxon>Eukaryota</taxon>
        <taxon>Fungi</taxon>
        <taxon>Dikarya</taxon>
        <taxon>Basidiomycota</taxon>
        <taxon>Ustilaginomycotina</taxon>
        <taxon>Ustilaginomycetes</taxon>
        <taxon>Ustilaginales</taxon>
        <taxon>Ustilaginaceae</taxon>
        <taxon>Mycosarcoma</taxon>
    </lineage>
</organism>
<accession>Q4P184</accession>
<accession>A0A0D1DNP7</accession>
<protein>
    <recommendedName>
        <fullName>ATP-dependent RNA helicase FAL1</fullName>
        <ecNumber>3.6.4.13</ecNumber>
    </recommendedName>
</protein>
<sequence>MSGGINAGDSKLAFESSEHVKVATTFDAMGLKEDLLRGIYAYNFEKPSAIQQRAILPIIRGRDVIAQAQSGTGKTATFSISMLQSIDTTLRETQALVLSPTRELAIQIQSVVLALGDYLNVQCHACIGGTSVGEDIRKLDYGQHIVSGTPGRVYDMIRRRHLRTKNIKMLILDESDELLNMGFKDQIYDVYRYLPPSTQVVLLSATLPQDVLEMTSKFMTDPVRILVKRDELTLEGIKQFFVAVEKEEWKFDTLCDLYDTLTITQAVIFCNTRRKVDWLSAKMKENNFQVSSMHGEMQQKERDEVMAEFRQGSSRVLITTDVWARGIDIANISLVINYDLPTNRENYIHRIGRSGRFGRKGVAINFVTVDDVRTLRDIEQFYSTQIDEMPVKLEDML</sequence>
<proteinExistence type="inferred from homology"/>
<dbReference type="EC" id="3.6.4.13"/>
<dbReference type="EMBL" id="CM003160">
    <property type="protein sequence ID" value="KIS66039.1"/>
    <property type="molecule type" value="Genomic_DNA"/>
</dbReference>
<dbReference type="RefSeq" id="XP_011392473.1">
    <property type="nucleotide sequence ID" value="XM_011394171.1"/>
</dbReference>
<dbReference type="SMR" id="Q4P184"/>
<dbReference type="FunCoup" id="Q4P184">
    <property type="interactions" value="422"/>
</dbReference>
<dbReference type="STRING" id="237631.Q4P184"/>
<dbReference type="EnsemblFungi" id="KIS66039">
    <property type="protein sequence ID" value="KIS66039"/>
    <property type="gene ID" value="UMAG_06129"/>
</dbReference>
<dbReference type="GeneID" id="23565823"/>
<dbReference type="KEGG" id="uma:UMAG_06129"/>
<dbReference type="VEuPathDB" id="FungiDB:UMAG_06129"/>
<dbReference type="eggNOG" id="KOG0328">
    <property type="taxonomic scope" value="Eukaryota"/>
</dbReference>
<dbReference type="HOGENOM" id="CLU_003041_1_0_1"/>
<dbReference type="InParanoid" id="Q4P184"/>
<dbReference type="OMA" id="TRFHDFK"/>
<dbReference type="OrthoDB" id="10265785at2759"/>
<dbReference type="Proteomes" id="UP000000561">
    <property type="component" value="Chromosome 21"/>
</dbReference>
<dbReference type="GO" id="GO:0071013">
    <property type="term" value="C:catalytic step 2 spliceosome"/>
    <property type="evidence" value="ECO:0000318"/>
    <property type="project" value="GO_Central"/>
</dbReference>
<dbReference type="GO" id="GO:0005730">
    <property type="term" value="C:nucleolus"/>
    <property type="evidence" value="ECO:0000318"/>
    <property type="project" value="GO_Central"/>
</dbReference>
<dbReference type="GO" id="GO:0005524">
    <property type="term" value="F:ATP binding"/>
    <property type="evidence" value="ECO:0007669"/>
    <property type="project" value="UniProtKB-KW"/>
</dbReference>
<dbReference type="GO" id="GO:0016887">
    <property type="term" value="F:ATP hydrolysis activity"/>
    <property type="evidence" value="ECO:0007669"/>
    <property type="project" value="RHEA"/>
</dbReference>
<dbReference type="GO" id="GO:0003729">
    <property type="term" value="F:mRNA binding"/>
    <property type="evidence" value="ECO:0000318"/>
    <property type="project" value="GO_Central"/>
</dbReference>
<dbReference type="GO" id="GO:0003724">
    <property type="term" value="F:RNA helicase activity"/>
    <property type="evidence" value="ECO:0000318"/>
    <property type="project" value="GO_Central"/>
</dbReference>
<dbReference type="GO" id="GO:0000398">
    <property type="term" value="P:mRNA splicing, via spliceosome"/>
    <property type="evidence" value="ECO:0000318"/>
    <property type="project" value="GO_Central"/>
</dbReference>
<dbReference type="GO" id="GO:0006364">
    <property type="term" value="P:rRNA processing"/>
    <property type="evidence" value="ECO:0007669"/>
    <property type="project" value="UniProtKB-KW"/>
</dbReference>
<dbReference type="CDD" id="cd18045">
    <property type="entry name" value="DEADc_EIF4AIII_DDX48"/>
    <property type="match status" value="1"/>
</dbReference>
<dbReference type="CDD" id="cd18787">
    <property type="entry name" value="SF2_C_DEAD"/>
    <property type="match status" value="1"/>
</dbReference>
<dbReference type="FunFam" id="3.40.50.300:FF:000031">
    <property type="entry name" value="Eukaryotic initiation factor 4A-III"/>
    <property type="match status" value="1"/>
</dbReference>
<dbReference type="FunFam" id="3.40.50.300:FF:000498">
    <property type="entry name" value="Eukaryotic initiation factor 4A-III"/>
    <property type="match status" value="1"/>
</dbReference>
<dbReference type="Gene3D" id="3.40.50.300">
    <property type="entry name" value="P-loop containing nucleotide triphosphate hydrolases"/>
    <property type="match status" value="2"/>
</dbReference>
<dbReference type="InterPro" id="IPR011545">
    <property type="entry name" value="DEAD/DEAH_box_helicase_dom"/>
</dbReference>
<dbReference type="InterPro" id="IPR014001">
    <property type="entry name" value="Helicase_ATP-bd"/>
</dbReference>
<dbReference type="InterPro" id="IPR001650">
    <property type="entry name" value="Helicase_C-like"/>
</dbReference>
<dbReference type="InterPro" id="IPR027417">
    <property type="entry name" value="P-loop_NTPase"/>
</dbReference>
<dbReference type="InterPro" id="IPR014014">
    <property type="entry name" value="RNA_helicase_DEAD_Q_motif"/>
</dbReference>
<dbReference type="PANTHER" id="PTHR47958">
    <property type="entry name" value="ATP-DEPENDENT RNA HELICASE DBP3"/>
    <property type="match status" value="1"/>
</dbReference>
<dbReference type="Pfam" id="PF00270">
    <property type="entry name" value="DEAD"/>
    <property type="match status" value="1"/>
</dbReference>
<dbReference type="Pfam" id="PF00271">
    <property type="entry name" value="Helicase_C"/>
    <property type="match status" value="1"/>
</dbReference>
<dbReference type="SMART" id="SM00487">
    <property type="entry name" value="DEXDc"/>
    <property type="match status" value="1"/>
</dbReference>
<dbReference type="SMART" id="SM00490">
    <property type="entry name" value="HELICc"/>
    <property type="match status" value="1"/>
</dbReference>
<dbReference type="SUPFAM" id="SSF52540">
    <property type="entry name" value="P-loop containing nucleoside triphosphate hydrolases"/>
    <property type="match status" value="1"/>
</dbReference>
<dbReference type="PROSITE" id="PS51192">
    <property type="entry name" value="HELICASE_ATP_BIND_1"/>
    <property type="match status" value="1"/>
</dbReference>
<dbReference type="PROSITE" id="PS51194">
    <property type="entry name" value="HELICASE_CTER"/>
    <property type="match status" value="1"/>
</dbReference>
<dbReference type="PROSITE" id="PS51195">
    <property type="entry name" value="Q_MOTIF"/>
    <property type="match status" value="1"/>
</dbReference>
<comment type="function">
    <text evidence="1">ATP-dependent RNA helicase involved in 40S ribosomal subunit biogenesis. Required for the processing and cleavage of 35S pre-rRNA at sites A0, A1, and A2, leading to mature 18S rRNA (By similarity).</text>
</comment>
<comment type="catalytic activity">
    <reaction>
        <text>ATP + H2O = ADP + phosphate + H(+)</text>
        <dbReference type="Rhea" id="RHEA:13065"/>
        <dbReference type="ChEBI" id="CHEBI:15377"/>
        <dbReference type="ChEBI" id="CHEBI:15378"/>
        <dbReference type="ChEBI" id="CHEBI:30616"/>
        <dbReference type="ChEBI" id="CHEBI:43474"/>
        <dbReference type="ChEBI" id="CHEBI:456216"/>
        <dbReference type="EC" id="3.6.4.13"/>
    </reaction>
</comment>
<comment type="subcellular location">
    <subcellularLocation>
        <location evidence="1">Nucleus</location>
        <location evidence="1">Nucleolus</location>
    </subcellularLocation>
</comment>
<comment type="domain">
    <text>The Q motif is unique to and characteristic of the DEAD box family of RNA helicases and controls ATP binding and hydrolysis.</text>
</comment>
<comment type="similarity">
    <text evidence="4">Belongs to the DEAD box helicase family. DDX48/FAL1 subfamily.</text>
</comment>
<evidence type="ECO:0000250" key="1"/>
<evidence type="ECO:0000255" key="2">
    <source>
        <dbReference type="PROSITE-ProRule" id="PRU00541"/>
    </source>
</evidence>
<evidence type="ECO:0000255" key="3">
    <source>
        <dbReference type="PROSITE-ProRule" id="PRU00542"/>
    </source>
</evidence>
<evidence type="ECO:0000305" key="4"/>